<accession>C1AL03</accession>
<keyword id="KW-0227">DNA damage</keyword>
<keyword id="KW-0234">DNA repair</keyword>
<keyword id="KW-0255">Endonuclease</keyword>
<keyword id="KW-0378">Hydrolase</keyword>
<keyword id="KW-0479">Metal-binding</keyword>
<keyword id="KW-0540">Nuclease</keyword>
<keyword id="KW-0862">Zinc</keyword>
<organism>
    <name type="scientific">Mycobacterium bovis (strain BCG / Tokyo 172 / ATCC 35737 / TMC 1019)</name>
    <dbReference type="NCBI Taxonomy" id="561275"/>
    <lineage>
        <taxon>Bacteria</taxon>
        <taxon>Bacillati</taxon>
        <taxon>Actinomycetota</taxon>
        <taxon>Actinomycetes</taxon>
        <taxon>Mycobacteriales</taxon>
        <taxon>Mycobacteriaceae</taxon>
        <taxon>Mycobacterium</taxon>
        <taxon>Mycobacterium tuberculosis complex</taxon>
    </lineage>
</organism>
<evidence type="ECO:0000255" key="1">
    <source>
        <dbReference type="HAMAP-Rule" id="MF_00152"/>
    </source>
</evidence>
<comment type="function">
    <text evidence="1">Endonuclease IV plays a role in DNA repair. It cleaves phosphodiester bonds at apurinic or apyrimidinic (AP) sites, generating a 3'-hydroxyl group and a 5'-terminal sugar phosphate.</text>
</comment>
<comment type="catalytic activity">
    <reaction evidence="1">
        <text>Endonucleolytic cleavage to 5'-phosphooligonucleotide end-products.</text>
        <dbReference type="EC" id="3.1.21.2"/>
    </reaction>
</comment>
<comment type="cofactor">
    <cofactor evidence="1">
        <name>Zn(2+)</name>
        <dbReference type="ChEBI" id="CHEBI:29105"/>
    </cofactor>
    <text evidence="1">Binds 3 Zn(2+) ions.</text>
</comment>
<comment type="similarity">
    <text evidence="1">Belongs to the AP endonuclease 2 family.</text>
</comment>
<sequence>MLIGSHVSPTDPLAAAEAEGADVVQIFLGNPQSWKAPKPRDDAAALKAATLPIYVHAPYLINLASANNRVRIPSRKILQETCAAAADIGAAAVIVHGGHVADDNDIDKGFQRWRKALDRLETEVPVYLENTAGGDHAMARRFDTIARLWDVIGDTGIGFCLDTCHTWAAGEALTDAVDRIKAITGRIDLVHCNDSRDEAGSGRDRHANLGSGQIDPDLLVAAVKAAGAPVICETADQGRKDDIAFLRERTGS</sequence>
<reference key="1">
    <citation type="journal article" date="2009" name="Vaccine">
        <title>Whole genome sequence analysis of Mycobacterium bovis bacillus Calmette-Guerin (BCG) Tokyo 172: a comparative study of BCG vaccine substrains.</title>
        <authorList>
            <person name="Seki M."/>
            <person name="Honda I."/>
            <person name="Fujita I."/>
            <person name="Yano I."/>
            <person name="Yamamoto S."/>
            <person name="Koyama A."/>
        </authorList>
    </citation>
    <scope>NUCLEOTIDE SEQUENCE [LARGE SCALE GENOMIC DNA]</scope>
    <source>
        <strain>BCG / Tokyo 172 / ATCC 35737 / TMC 1019</strain>
    </source>
</reference>
<name>END4_MYCBT</name>
<feature type="chain" id="PRO_1000123332" description="Probable endonuclease 4">
    <location>
        <begin position="1"/>
        <end position="252"/>
    </location>
</feature>
<feature type="binding site" evidence="1">
    <location>
        <position position="56"/>
    </location>
    <ligand>
        <name>Zn(2+)</name>
        <dbReference type="ChEBI" id="CHEBI:29105"/>
        <label>1</label>
    </ligand>
</feature>
<feature type="binding site" evidence="1">
    <location>
        <position position="96"/>
    </location>
    <ligand>
        <name>Zn(2+)</name>
        <dbReference type="ChEBI" id="CHEBI:29105"/>
        <label>1</label>
    </ligand>
</feature>
<feature type="binding site" evidence="1">
    <location>
        <position position="129"/>
    </location>
    <ligand>
        <name>Zn(2+)</name>
        <dbReference type="ChEBI" id="CHEBI:29105"/>
        <label>1</label>
    </ligand>
</feature>
<feature type="binding site" evidence="1">
    <location>
        <position position="129"/>
    </location>
    <ligand>
        <name>Zn(2+)</name>
        <dbReference type="ChEBI" id="CHEBI:29105"/>
        <label>2</label>
    </ligand>
</feature>
<feature type="binding site" evidence="1">
    <location>
        <position position="162"/>
    </location>
    <ligand>
        <name>Zn(2+)</name>
        <dbReference type="ChEBI" id="CHEBI:29105"/>
        <label>2</label>
    </ligand>
</feature>
<feature type="binding site" evidence="1">
    <location>
        <position position="165"/>
    </location>
    <ligand>
        <name>Zn(2+)</name>
        <dbReference type="ChEBI" id="CHEBI:29105"/>
        <label>3</label>
    </ligand>
</feature>
<feature type="binding site" evidence="1">
    <location>
        <position position="191"/>
    </location>
    <ligand>
        <name>Zn(2+)</name>
        <dbReference type="ChEBI" id="CHEBI:29105"/>
        <label>2</label>
    </ligand>
</feature>
<feature type="binding site" evidence="1">
    <location>
        <position position="204"/>
    </location>
    <ligand>
        <name>Zn(2+)</name>
        <dbReference type="ChEBI" id="CHEBI:29105"/>
        <label>3</label>
    </ligand>
</feature>
<feature type="binding site" evidence="1">
    <location>
        <position position="206"/>
    </location>
    <ligand>
        <name>Zn(2+)</name>
        <dbReference type="ChEBI" id="CHEBI:29105"/>
        <label>3</label>
    </ligand>
</feature>
<feature type="binding site" evidence="1">
    <location>
        <position position="233"/>
    </location>
    <ligand>
        <name>Zn(2+)</name>
        <dbReference type="ChEBI" id="CHEBI:29105"/>
        <label>2</label>
    </ligand>
</feature>
<protein>
    <recommendedName>
        <fullName evidence="1">Probable endonuclease 4</fullName>
        <ecNumber evidence="1">3.1.21.2</ecNumber>
    </recommendedName>
    <alternativeName>
        <fullName evidence="1">Endodeoxyribonuclease IV</fullName>
    </alternativeName>
    <alternativeName>
        <fullName evidence="1">Endonuclease IV</fullName>
    </alternativeName>
</protein>
<dbReference type="EC" id="3.1.21.2" evidence="1"/>
<dbReference type="EMBL" id="AP010918">
    <property type="protein sequence ID" value="BAH24982.1"/>
    <property type="molecule type" value="Genomic_DNA"/>
</dbReference>
<dbReference type="RefSeq" id="WP_003403419.1">
    <property type="nucleotide sequence ID" value="NZ_CP014566.1"/>
</dbReference>
<dbReference type="SMR" id="C1AL03"/>
<dbReference type="KEGG" id="mbt:JTY_0689"/>
<dbReference type="HOGENOM" id="CLU_025885_0_2_11"/>
<dbReference type="GO" id="GO:0008833">
    <property type="term" value="F:deoxyribonuclease IV (phage-T4-induced) activity"/>
    <property type="evidence" value="ECO:0007669"/>
    <property type="project" value="UniProtKB-UniRule"/>
</dbReference>
<dbReference type="GO" id="GO:0003677">
    <property type="term" value="F:DNA binding"/>
    <property type="evidence" value="ECO:0007669"/>
    <property type="project" value="InterPro"/>
</dbReference>
<dbReference type="GO" id="GO:0003906">
    <property type="term" value="F:DNA-(apurinic or apyrimidinic site) endonuclease activity"/>
    <property type="evidence" value="ECO:0007669"/>
    <property type="project" value="TreeGrafter"/>
</dbReference>
<dbReference type="GO" id="GO:0008081">
    <property type="term" value="F:phosphoric diester hydrolase activity"/>
    <property type="evidence" value="ECO:0007669"/>
    <property type="project" value="TreeGrafter"/>
</dbReference>
<dbReference type="GO" id="GO:0008270">
    <property type="term" value="F:zinc ion binding"/>
    <property type="evidence" value="ECO:0007669"/>
    <property type="project" value="UniProtKB-UniRule"/>
</dbReference>
<dbReference type="GO" id="GO:0006284">
    <property type="term" value="P:base-excision repair"/>
    <property type="evidence" value="ECO:0007669"/>
    <property type="project" value="TreeGrafter"/>
</dbReference>
<dbReference type="CDD" id="cd00019">
    <property type="entry name" value="AP2Ec"/>
    <property type="match status" value="1"/>
</dbReference>
<dbReference type="FunFam" id="3.20.20.150:FF:000019">
    <property type="entry name" value="Probable endonuclease 4"/>
    <property type="match status" value="1"/>
</dbReference>
<dbReference type="Gene3D" id="3.20.20.150">
    <property type="entry name" value="Divalent-metal-dependent TIM barrel enzymes"/>
    <property type="match status" value="1"/>
</dbReference>
<dbReference type="HAMAP" id="MF_00152">
    <property type="entry name" value="Nfo"/>
    <property type="match status" value="1"/>
</dbReference>
<dbReference type="InterPro" id="IPR001719">
    <property type="entry name" value="AP_endonuc_2"/>
</dbReference>
<dbReference type="InterPro" id="IPR018246">
    <property type="entry name" value="AP_endonuc_F2_Zn_BS"/>
</dbReference>
<dbReference type="InterPro" id="IPR036237">
    <property type="entry name" value="Xyl_isomerase-like_sf"/>
</dbReference>
<dbReference type="InterPro" id="IPR013022">
    <property type="entry name" value="Xyl_isomerase-like_TIM-brl"/>
</dbReference>
<dbReference type="NCBIfam" id="NF002198">
    <property type="entry name" value="PRK01060.1-3"/>
    <property type="match status" value="1"/>
</dbReference>
<dbReference type="PANTHER" id="PTHR21445:SF0">
    <property type="entry name" value="APURINIC-APYRIMIDINIC ENDONUCLEASE"/>
    <property type="match status" value="1"/>
</dbReference>
<dbReference type="PANTHER" id="PTHR21445">
    <property type="entry name" value="ENDONUCLEASE IV ENDODEOXYRIBONUCLEASE IV"/>
    <property type="match status" value="1"/>
</dbReference>
<dbReference type="Pfam" id="PF01261">
    <property type="entry name" value="AP_endonuc_2"/>
    <property type="match status" value="1"/>
</dbReference>
<dbReference type="SMART" id="SM00518">
    <property type="entry name" value="AP2Ec"/>
    <property type="match status" value="1"/>
</dbReference>
<dbReference type="SUPFAM" id="SSF51658">
    <property type="entry name" value="Xylose isomerase-like"/>
    <property type="match status" value="1"/>
</dbReference>
<dbReference type="PROSITE" id="PS00729">
    <property type="entry name" value="AP_NUCLEASE_F2_1"/>
    <property type="match status" value="1"/>
</dbReference>
<dbReference type="PROSITE" id="PS00730">
    <property type="entry name" value="AP_NUCLEASE_F2_2"/>
    <property type="match status" value="1"/>
</dbReference>
<dbReference type="PROSITE" id="PS00731">
    <property type="entry name" value="AP_NUCLEASE_F2_3"/>
    <property type="match status" value="1"/>
</dbReference>
<dbReference type="PROSITE" id="PS51432">
    <property type="entry name" value="AP_NUCLEASE_F2_4"/>
    <property type="match status" value="1"/>
</dbReference>
<proteinExistence type="inferred from homology"/>
<gene>
    <name evidence="1" type="primary">nfo</name>
    <name type="ordered locus">JTY_0689</name>
</gene>